<dbReference type="EMBL" id="U35165">
    <property type="protein sequence ID" value="AAC52543.1"/>
    <property type="molecule type" value="Genomic_DNA"/>
</dbReference>
<dbReference type="SMR" id="Q36096"/>
<dbReference type="GO" id="GO:0005743">
    <property type="term" value="C:mitochondrial inner membrane"/>
    <property type="evidence" value="ECO:0007669"/>
    <property type="project" value="UniProtKB-SubCell"/>
</dbReference>
<dbReference type="GO" id="GO:0045275">
    <property type="term" value="C:respiratory chain complex III"/>
    <property type="evidence" value="ECO:0007669"/>
    <property type="project" value="InterPro"/>
</dbReference>
<dbReference type="GO" id="GO:0046872">
    <property type="term" value="F:metal ion binding"/>
    <property type="evidence" value="ECO:0007669"/>
    <property type="project" value="UniProtKB-KW"/>
</dbReference>
<dbReference type="GO" id="GO:0008121">
    <property type="term" value="F:ubiquinol-cytochrome-c reductase activity"/>
    <property type="evidence" value="ECO:0007669"/>
    <property type="project" value="InterPro"/>
</dbReference>
<dbReference type="GO" id="GO:0006122">
    <property type="term" value="P:mitochondrial electron transport, ubiquinol to cytochrome c"/>
    <property type="evidence" value="ECO:0007669"/>
    <property type="project" value="TreeGrafter"/>
</dbReference>
<dbReference type="CDD" id="cd00290">
    <property type="entry name" value="cytochrome_b_C"/>
    <property type="match status" value="1"/>
</dbReference>
<dbReference type="CDD" id="cd00284">
    <property type="entry name" value="Cytochrome_b_N"/>
    <property type="match status" value="1"/>
</dbReference>
<dbReference type="FunFam" id="1.20.810.10:FF:000002">
    <property type="entry name" value="Cytochrome b"/>
    <property type="match status" value="1"/>
</dbReference>
<dbReference type="Gene3D" id="1.20.810.10">
    <property type="entry name" value="Cytochrome Bc1 Complex, Chain C"/>
    <property type="match status" value="1"/>
</dbReference>
<dbReference type="InterPro" id="IPR005798">
    <property type="entry name" value="Cyt_b/b6_C"/>
</dbReference>
<dbReference type="InterPro" id="IPR036150">
    <property type="entry name" value="Cyt_b/b6_C_sf"/>
</dbReference>
<dbReference type="InterPro" id="IPR005797">
    <property type="entry name" value="Cyt_b/b6_N"/>
</dbReference>
<dbReference type="InterPro" id="IPR027387">
    <property type="entry name" value="Cytb/b6-like_sf"/>
</dbReference>
<dbReference type="InterPro" id="IPR030689">
    <property type="entry name" value="Cytochrome_b"/>
</dbReference>
<dbReference type="InterPro" id="IPR048260">
    <property type="entry name" value="Cytochrome_b_C_euk/bac"/>
</dbReference>
<dbReference type="InterPro" id="IPR048259">
    <property type="entry name" value="Cytochrome_b_N_euk/bac"/>
</dbReference>
<dbReference type="InterPro" id="IPR016174">
    <property type="entry name" value="Di-haem_cyt_TM"/>
</dbReference>
<dbReference type="PANTHER" id="PTHR19271">
    <property type="entry name" value="CYTOCHROME B"/>
    <property type="match status" value="1"/>
</dbReference>
<dbReference type="PANTHER" id="PTHR19271:SF16">
    <property type="entry name" value="CYTOCHROME B"/>
    <property type="match status" value="1"/>
</dbReference>
<dbReference type="Pfam" id="PF00032">
    <property type="entry name" value="Cytochrom_B_C"/>
    <property type="match status" value="1"/>
</dbReference>
<dbReference type="Pfam" id="PF00033">
    <property type="entry name" value="Cytochrome_B"/>
    <property type="match status" value="1"/>
</dbReference>
<dbReference type="PIRSF" id="PIRSF038885">
    <property type="entry name" value="COB"/>
    <property type="match status" value="1"/>
</dbReference>
<dbReference type="SUPFAM" id="SSF81648">
    <property type="entry name" value="a domain/subunit of cytochrome bc1 complex (Ubiquinol-cytochrome c reductase)"/>
    <property type="match status" value="1"/>
</dbReference>
<dbReference type="SUPFAM" id="SSF81342">
    <property type="entry name" value="Transmembrane di-heme cytochromes"/>
    <property type="match status" value="1"/>
</dbReference>
<dbReference type="PROSITE" id="PS51003">
    <property type="entry name" value="CYTB_CTER"/>
    <property type="match status" value="1"/>
</dbReference>
<dbReference type="PROSITE" id="PS51002">
    <property type="entry name" value="CYTB_NTER"/>
    <property type="match status" value="1"/>
</dbReference>
<comment type="function">
    <text evidence="2">Component of the ubiquinol-cytochrome c reductase complex (complex III or cytochrome b-c1 complex) that is part of the mitochondrial respiratory chain. The b-c1 complex mediates electron transfer from ubiquinol to cytochrome c. Contributes to the generation of a proton gradient across the mitochondrial membrane that is then used for ATP synthesis.</text>
</comment>
<comment type="cofactor">
    <cofactor evidence="2">
        <name>heme b</name>
        <dbReference type="ChEBI" id="CHEBI:60344"/>
    </cofactor>
    <text evidence="2">Binds 2 heme b groups non-covalently.</text>
</comment>
<comment type="subunit">
    <text evidence="2">The cytochrome bc1 complex contains 11 subunits: 3 respiratory subunits (MT-CYB, CYC1 and UQCRFS1), 2 core proteins (UQCRC1 and UQCRC2) and 6 low-molecular weight proteins (UQCRH/QCR6, UQCRB/QCR7, UQCRQ/QCR8, UQCR10/QCR9, UQCR11/QCR10 and a cleavage product of UQCRFS1). This cytochrome bc1 complex then forms a dimer.</text>
</comment>
<comment type="subcellular location">
    <subcellularLocation>
        <location evidence="2">Mitochondrion inner membrane</location>
        <topology evidence="2">Multi-pass membrane protein</topology>
    </subcellularLocation>
</comment>
<comment type="miscellaneous">
    <text evidence="1">Heme 1 (or BL or b562) is low-potential and absorbs at about 562 nm, and heme 2 (or BH or b566) is high-potential and absorbs at about 566 nm.</text>
</comment>
<comment type="similarity">
    <text evidence="3 4">Belongs to the cytochrome b family.</text>
</comment>
<comment type="caution">
    <text evidence="2">The full-length protein contains only eight transmembrane helices, not nine as predicted by bioinformatics tools.</text>
</comment>
<feature type="chain" id="PRO_0000255153" description="Cytochrome b">
    <location>
        <begin position="1"/>
        <end position="379"/>
    </location>
</feature>
<feature type="transmembrane region" description="Helical" evidence="2">
    <location>
        <begin position="33"/>
        <end position="53"/>
    </location>
</feature>
<feature type="transmembrane region" description="Helical" evidence="2">
    <location>
        <begin position="77"/>
        <end position="98"/>
    </location>
</feature>
<feature type="transmembrane region" description="Helical" evidence="2">
    <location>
        <begin position="113"/>
        <end position="133"/>
    </location>
</feature>
<feature type="transmembrane region" description="Helical" evidence="2">
    <location>
        <begin position="178"/>
        <end position="198"/>
    </location>
</feature>
<feature type="transmembrane region" description="Helical" evidence="2">
    <location>
        <begin position="226"/>
        <end position="246"/>
    </location>
</feature>
<feature type="transmembrane region" description="Helical" evidence="2">
    <location>
        <begin position="288"/>
        <end position="308"/>
    </location>
</feature>
<feature type="transmembrane region" description="Helical" evidence="2">
    <location>
        <begin position="320"/>
        <end position="340"/>
    </location>
</feature>
<feature type="transmembrane region" description="Helical" evidence="2">
    <location>
        <begin position="347"/>
        <end position="367"/>
    </location>
</feature>
<feature type="binding site" description="axial binding residue" evidence="2">
    <location>
        <position position="83"/>
    </location>
    <ligand>
        <name>heme b</name>
        <dbReference type="ChEBI" id="CHEBI:60344"/>
        <label>b562</label>
    </ligand>
    <ligandPart>
        <name>Fe</name>
        <dbReference type="ChEBI" id="CHEBI:18248"/>
    </ligandPart>
</feature>
<feature type="binding site" description="axial binding residue" evidence="2">
    <location>
        <position position="97"/>
    </location>
    <ligand>
        <name>heme b</name>
        <dbReference type="ChEBI" id="CHEBI:60344"/>
        <label>b566</label>
    </ligand>
    <ligandPart>
        <name>Fe</name>
        <dbReference type="ChEBI" id="CHEBI:18248"/>
    </ligandPart>
</feature>
<feature type="binding site" description="axial binding residue" evidence="2">
    <location>
        <position position="182"/>
    </location>
    <ligand>
        <name>heme b</name>
        <dbReference type="ChEBI" id="CHEBI:60344"/>
        <label>b562</label>
    </ligand>
    <ligandPart>
        <name>Fe</name>
        <dbReference type="ChEBI" id="CHEBI:18248"/>
    </ligandPart>
</feature>
<feature type="binding site" description="axial binding residue" evidence="2">
    <location>
        <position position="196"/>
    </location>
    <ligand>
        <name>heme b</name>
        <dbReference type="ChEBI" id="CHEBI:60344"/>
        <label>b566</label>
    </ligand>
    <ligandPart>
        <name>Fe</name>
        <dbReference type="ChEBI" id="CHEBI:18248"/>
    </ligandPart>
</feature>
<feature type="binding site" evidence="2">
    <location>
        <position position="201"/>
    </location>
    <ligand>
        <name>a ubiquinone</name>
        <dbReference type="ChEBI" id="CHEBI:16389"/>
    </ligand>
</feature>
<organism>
    <name type="scientific">Trinomys paratus</name>
    <name type="common">Spiked Atlantic spiny rat</name>
    <name type="synonym">Proechimys paratus</name>
    <dbReference type="NCBI Taxonomy" id="42827"/>
    <lineage>
        <taxon>Eukaryota</taxon>
        <taxon>Metazoa</taxon>
        <taxon>Chordata</taxon>
        <taxon>Craniata</taxon>
        <taxon>Vertebrata</taxon>
        <taxon>Euteleostomi</taxon>
        <taxon>Mammalia</taxon>
        <taxon>Eutheria</taxon>
        <taxon>Euarchontoglires</taxon>
        <taxon>Glires</taxon>
        <taxon>Rodentia</taxon>
        <taxon>Hystricomorpha</taxon>
        <taxon>Echimyidae</taxon>
        <taxon>Trinomys</taxon>
    </lineage>
</organism>
<sequence length="379" mass="42964">MTNIRKSHPLIKIINHSFIDLPTPSNISAWWNFGSLLGVCLALQIITGLFLAMHYTADTTTAFSSVTHICRDVNYGWLIRYAHANGASMFFIFLYFHIGRGIYYGSYNFMETWNIGVILLFLVMATAFMGYVLPWGQMSFWGATVITNLLSAIPYIGPMLVEWIWGGFSVDKATLTRFFAFHFILPFIITAMVMIHLLFLHETGSNNPSGLNSDSDKIPFHPYYTIKDILGVLLMLLTLLSLILFSPDLLGDPDNYSPANPLNTPPHIKPEWYFLFAYAILRSIPNKLGGVLALAFSILILMLFPALHMSKQRSMLFRPVSQCLLWILVANLIILTWIGGQPVEYPFITIGQMASISYFCIILILMPTTSFMENKLLKW</sequence>
<keyword id="KW-0249">Electron transport</keyword>
<keyword id="KW-0349">Heme</keyword>
<keyword id="KW-0408">Iron</keyword>
<keyword id="KW-0472">Membrane</keyword>
<keyword id="KW-0479">Metal-binding</keyword>
<keyword id="KW-0496">Mitochondrion</keyword>
<keyword id="KW-0999">Mitochondrion inner membrane</keyword>
<keyword id="KW-0679">Respiratory chain</keyword>
<keyword id="KW-0812">Transmembrane</keyword>
<keyword id="KW-1133">Transmembrane helix</keyword>
<keyword id="KW-0813">Transport</keyword>
<keyword id="KW-0830">Ubiquinone</keyword>
<geneLocation type="mitochondrion"/>
<reference key="1">
    <citation type="journal article" date="1996" name="Mol. Phylogenet. Evol.">
        <title>The simultaneous diversification of South American echimyid rodents (Hystricognathi) based on complete cytochrome b sequences.</title>
        <authorList>
            <person name="Lara M.C."/>
            <person name="Patton J.L."/>
            <person name="da Silva M.N.F."/>
        </authorList>
    </citation>
    <scope>NUCLEOTIDE SEQUENCE [GENOMIC DNA]</scope>
</reference>
<proteinExistence type="inferred from homology"/>
<protein>
    <recommendedName>
        <fullName>Cytochrome b</fullName>
    </recommendedName>
    <alternativeName>
        <fullName>Complex III subunit 3</fullName>
    </alternativeName>
    <alternativeName>
        <fullName>Complex III subunit III</fullName>
    </alternativeName>
    <alternativeName>
        <fullName>Cytochrome b-c1 complex subunit 3</fullName>
    </alternativeName>
    <alternativeName>
        <fullName>Ubiquinol-cytochrome-c reductase complex cytochrome b subunit</fullName>
    </alternativeName>
</protein>
<accession>Q36096</accession>
<name>CYB_TRIPB</name>
<evidence type="ECO:0000250" key="1"/>
<evidence type="ECO:0000250" key="2">
    <source>
        <dbReference type="UniProtKB" id="P00157"/>
    </source>
</evidence>
<evidence type="ECO:0000255" key="3">
    <source>
        <dbReference type="PROSITE-ProRule" id="PRU00967"/>
    </source>
</evidence>
<evidence type="ECO:0000255" key="4">
    <source>
        <dbReference type="PROSITE-ProRule" id="PRU00968"/>
    </source>
</evidence>
<gene>
    <name type="primary">MT-CYB</name>
    <name type="synonym">COB</name>
    <name type="synonym">CYTB</name>
    <name type="synonym">MTCYB</name>
</gene>